<organism>
    <name type="scientific">Lactococcus lactis subsp. cremoris (strain SK11)</name>
    <dbReference type="NCBI Taxonomy" id="272622"/>
    <lineage>
        <taxon>Bacteria</taxon>
        <taxon>Bacillati</taxon>
        <taxon>Bacillota</taxon>
        <taxon>Bacilli</taxon>
        <taxon>Lactobacillales</taxon>
        <taxon>Streptococcaceae</taxon>
        <taxon>Lactococcus</taxon>
        <taxon>Lactococcus cremoris subsp. cremoris</taxon>
    </lineage>
</organism>
<comment type="function">
    <text evidence="1">Catalyzes the reversible isomerization-deamination of glucosamine 6-phosphate (GlcN6P) to form fructose 6-phosphate (Fru6P) and ammonium ion.</text>
</comment>
<comment type="catalytic activity">
    <reaction evidence="1">
        <text>alpha-D-glucosamine 6-phosphate + H2O = beta-D-fructose 6-phosphate + NH4(+)</text>
        <dbReference type="Rhea" id="RHEA:12172"/>
        <dbReference type="ChEBI" id="CHEBI:15377"/>
        <dbReference type="ChEBI" id="CHEBI:28938"/>
        <dbReference type="ChEBI" id="CHEBI:57634"/>
        <dbReference type="ChEBI" id="CHEBI:75989"/>
        <dbReference type="EC" id="3.5.99.6"/>
    </reaction>
</comment>
<comment type="pathway">
    <text evidence="1">Amino-sugar metabolism; N-acetylneuraminate degradation; D-fructose 6-phosphate from N-acetylneuraminate: step 5/5.</text>
</comment>
<comment type="similarity">
    <text evidence="1">Belongs to the glucosamine/galactosamine-6-phosphate isomerase family. NagB subfamily.</text>
</comment>
<sequence>MKVIVVKNQLEGGKIGLDLLKESINNGAKTLGLATGSTPVEFYNQIVNSDLDFTNMVSVNLDEYVGLDGSNEQSYRYFMTKHLFGEKPFKENFLPNGKATDLEAEAKHYDQIIEENPIDWQILGIGQNGHIGFNEPGTPAEITTHVVDLQESTIKANARFFESEADVPRKAISMGLASIMKSKNIVLMAYGKEKAEAIKGMVEGEVTTELPASILQNHANVTVIADEAAVSLLSK</sequence>
<protein>
    <recommendedName>
        <fullName evidence="1">Glucosamine-6-phosphate deaminase</fullName>
        <ecNumber evidence="1">3.5.99.6</ecNumber>
    </recommendedName>
    <alternativeName>
        <fullName evidence="1">GlcN6P deaminase</fullName>
        <shortName evidence="1">GNPDA</shortName>
    </alternativeName>
    <alternativeName>
        <fullName evidence="1">Glucosamine-6-phosphate isomerase</fullName>
    </alternativeName>
</protein>
<dbReference type="EC" id="3.5.99.6" evidence="1"/>
<dbReference type="EMBL" id="CP000425">
    <property type="protein sequence ID" value="ABJ73164.1"/>
    <property type="molecule type" value="Genomic_DNA"/>
</dbReference>
<dbReference type="RefSeq" id="WP_011676603.1">
    <property type="nucleotide sequence ID" value="NC_008527.1"/>
</dbReference>
<dbReference type="SMR" id="Q02Y08"/>
<dbReference type="KEGG" id="llc:LACR_1667"/>
<dbReference type="HOGENOM" id="CLU_049611_1_0_9"/>
<dbReference type="UniPathway" id="UPA00629">
    <property type="reaction ID" value="UER00684"/>
</dbReference>
<dbReference type="Proteomes" id="UP000000240">
    <property type="component" value="Chromosome"/>
</dbReference>
<dbReference type="GO" id="GO:0005737">
    <property type="term" value="C:cytoplasm"/>
    <property type="evidence" value="ECO:0007669"/>
    <property type="project" value="TreeGrafter"/>
</dbReference>
<dbReference type="GO" id="GO:0004342">
    <property type="term" value="F:glucosamine-6-phosphate deaminase activity"/>
    <property type="evidence" value="ECO:0007669"/>
    <property type="project" value="UniProtKB-UniRule"/>
</dbReference>
<dbReference type="GO" id="GO:0042802">
    <property type="term" value="F:identical protein binding"/>
    <property type="evidence" value="ECO:0007669"/>
    <property type="project" value="TreeGrafter"/>
</dbReference>
<dbReference type="GO" id="GO:0005975">
    <property type="term" value="P:carbohydrate metabolic process"/>
    <property type="evidence" value="ECO:0007669"/>
    <property type="project" value="InterPro"/>
</dbReference>
<dbReference type="GO" id="GO:0006043">
    <property type="term" value="P:glucosamine catabolic process"/>
    <property type="evidence" value="ECO:0007669"/>
    <property type="project" value="TreeGrafter"/>
</dbReference>
<dbReference type="GO" id="GO:0006046">
    <property type="term" value="P:N-acetylglucosamine catabolic process"/>
    <property type="evidence" value="ECO:0007669"/>
    <property type="project" value="TreeGrafter"/>
</dbReference>
<dbReference type="GO" id="GO:0019262">
    <property type="term" value="P:N-acetylneuraminate catabolic process"/>
    <property type="evidence" value="ECO:0007669"/>
    <property type="project" value="UniProtKB-UniRule"/>
</dbReference>
<dbReference type="CDD" id="cd01399">
    <property type="entry name" value="GlcN6P_deaminase"/>
    <property type="match status" value="1"/>
</dbReference>
<dbReference type="FunFam" id="3.40.50.1360:FF:000003">
    <property type="entry name" value="Glucosamine-6-phosphate deaminase"/>
    <property type="match status" value="1"/>
</dbReference>
<dbReference type="Gene3D" id="3.40.50.1360">
    <property type="match status" value="1"/>
</dbReference>
<dbReference type="HAMAP" id="MF_01241">
    <property type="entry name" value="GlcN6P_deamin"/>
    <property type="match status" value="1"/>
</dbReference>
<dbReference type="InterPro" id="IPR006148">
    <property type="entry name" value="Glc/Gal-6P_isomerase"/>
</dbReference>
<dbReference type="InterPro" id="IPR004547">
    <property type="entry name" value="Glucosamine6P_isomerase"/>
</dbReference>
<dbReference type="InterPro" id="IPR018321">
    <property type="entry name" value="Glucosamine6P_isomerase_CS"/>
</dbReference>
<dbReference type="InterPro" id="IPR037171">
    <property type="entry name" value="NagB/RpiA_transferase-like"/>
</dbReference>
<dbReference type="PANTHER" id="PTHR11280">
    <property type="entry name" value="GLUCOSAMINE-6-PHOSPHATE ISOMERASE"/>
    <property type="match status" value="1"/>
</dbReference>
<dbReference type="PANTHER" id="PTHR11280:SF5">
    <property type="entry name" value="GLUCOSAMINE-6-PHOSPHATE ISOMERASE"/>
    <property type="match status" value="1"/>
</dbReference>
<dbReference type="Pfam" id="PF01182">
    <property type="entry name" value="Glucosamine_iso"/>
    <property type="match status" value="1"/>
</dbReference>
<dbReference type="SUPFAM" id="SSF100950">
    <property type="entry name" value="NagB/RpiA/CoA transferase-like"/>
    <property type="match status" value="1"/>
</dbReference>
<dbReference type="PROSITE" id="PS01161">
    <property type="entry name" value="GLC_GALNAC_ISOMERASE"/>
    <property type="match status" value="1"/>
</dbReference>
<keyword id="KW-0119">Carbohydrate metabolism</keyword>
<keyword id="KW-0378">Hydrolase</keyword>
<accession>Q02Y08</accession>
<feature type="chain" id="PRO_1000066996" description="Glucosamine-6-phosphate deaminase">
    <location>
        <begin position="1"/>
        <end position="235"/>
    </location>
</feature>
<feature type="active site" description="Proton acceptor; for enolization step" evidence="1">
    <location>
        <position position="62"/>
    </location>
</feature>
<feature type="active site" description="For ring-opening step" evidence="1">
    <location>
        <position position="128"/>
    </location>
</feature>
<feature type="active site" description="Proton acceptor; for ring-opening step" evidence="1">
    <location>
        <position position="130"/>
    </location>
</feature>
<feature type="active site" description="For ring-opening step" evidence="1">
    <location>
        <position position="135"/>
    </location>
</feature>
<name>NAGB_LACLS</name>
<gene>
    <name evidence="1" type="primary">nagB</name>
    <name type="ordered locus">LACR_1667</name>
</gene>
<reference key="1">
    <citation type="journal article" date="2006" name="Proc. Natl. Acad. Sci. U.S.A.">
        <title>Comparative genomics of the lactic acid bacteria.</title>
        <authorList>
            <person name="Makarova K.S."/>
            <person name="Slesarev A."/>
            <person name="Wolf Y.I."/>
            <person name="Sorokin A."/>
            <person name="Mirkin B."/>
            <person name="Koonin E.V."/>
            <person name="Pavlov A."/>
            <person name="Pavlova N."/>
            <person name="Karamychev V."/>
            <person name="Polouchine N."/>
            <person name="Shakhova V."/>
            <person name="Grigoriev I."/>
            <person name="Lou Y."/>
            <person name="Rohksar D."/>
            <person name="Lucas S."/>
            <person name="Huang K."/>
            <person name="Goodstein D.M."/>
            <person name="Hawkins T."/>
            <person name="Plengvidhya V."/>
            <person name="Welker D."/>
            <person name="Hughes J."/>
            <person name="Goh Y."/>
            <person name="Benson A."/>
            <person name="Baldwin K."/>
            <person name="Lee J.-H."/>
            <person name="Diaz-Muniz I."/>
            <person name="Dosti B."/>
            <person name="Smeianov V."/>
            <person name="Wechter W."/>
            <person name="Barabote R."/>
            <person name="Lorca G."/>
            <person name="Altermann E."/>
            <person name="Barrangou R."/>
            <person name="Ganesan B."/>
            <person name="Xie Y."/>
            <person name="Rawsthorne H."/>
            <person name="Tamir D."/>
            <person name="Parker C."/>
            <person name="Breidt F."/>
            <person name="Broadbent J.R."/>
            <person name="Hutkins R."/>
            <person name="O'Sullivan D."/>
            <person name="Steele J."/>
            <person name="Unlu G."/>
            <person name="Saier M.H. Jr."/>
            <person name="Klaenhammer T."/>
            <person name="Richardson P."/>
            <person name="Kozyavkin S."/>
            <person name="Weimer B.C."/>
            <person name="Mills D.A."/>
        </authorList>
    </citation>
    <scope>NUCLEOTIDE SEQUENCE [LARGE SCALE GENOMIC DNA]</scope>
    <source>
        <strain>SK11</strain>
    </source>
</reference>
<proteinExistence type="inferred from homology"/>
<evidence type="ECO:0000255" key="1">
    <source>
        <dbReference type="HAMAP-Rule" id="MF_01241"/>
    </source>
</evidence>